<proteinExistence type="inferred from homology"/>
<name>MRAZ_SHIF8</name>
<gene>
    <name evidence="1" type="primary">mraZ</name>
    <name type="ordered locus">SFV_0074</name>
</gene>
<sequence>MFRGATLVNLDSKGRLSVPTRYREQLLENAAGQMVCTIDIHHPCLLLYPLPEWEIIEQKLSRLLSMNPVERRVQRLLLGHASECQMDGAGRLLIAPVLRQHAGLTKEVMLVGQFNKFELWDETTWHQQVKEDIDAEQLATGDLSERLQDLSL</sequence>
<dbReference type="EMBL" id="CP000266">
    <property type="protein sequence ID" value="ABF02360.1"/>
    <property type="molecule type" value="Genomic_DNA"/>
</dbReference>
<dbReference type="RefSeq" id="WP_005053563.1">
    <property type="nucleotide sequence ID" value="NC_008258.1"/>
</dbReference>
<dbReference type="SMR" id="Q0T8B6"/>
<dbReference type="KEGG" id="sfv:SFV_0074"/>
<dbReference type="HOGENOM" id="CLU_107907_2_0_6"/>
<dbReference type="Proteomes" id="UP000000659">
    <property type="component" value="Chromosome"/>
</dbReference>
<dbReference type="GO" id="GO:0005737">
    <property type="term" value="C:cytoplasm"/>
    <property type="evidence" value="ECO:0007669"/>
    <property type="project" value="UniProtKB-UniRule"/>
</dbReference>
<dbReference type="GO" id="GO:0009295">
    <property type="term" value="C:nucleoid"/>
    <property type="evidence" value="ECO:0007669"/>
    <property type="project" value="UniProtKB-SubCell"/>
</dbReference>
<dbReference type="GO" id="GO:0003700">
    <property type="term" value="F:DNA-binding transcription factor activity"/>
    <property type="evidence" value="ECO:0007669"/>
    <property type="project" value="UniProtKB-UniRule"/>
</dbReference>
<dbReference type="GO" id="GO:0000976">
    <property type="term" value="F:transcription cis-regulatory region binding"/>
    <property type="evidence" value="ECO:0007669"/>
    <property type="project" value="TreeGrafter"/>
</dbReference>
<dbReference type="GO" id="GO:2000143">
    <property type="term" value="P:negative regulation of DNA-templated transcription initiation"/>
    <property type="evidence" value="ECO:0007669"/>
    <property type="project" value="TreeGrafter"/>
</dbReference>
<dbReference type="CDD" id="cd16321">
    <property type="entry name" value="MraZ_C"/>
    <property type="match status" value="1"/>
</dbReference>
<dbReference type="CDD" id="cd16320">
    <property type="entry name" value="MraZ_N"/>
    <property type="match status" value="1"/>
</dbReference>
<dbReference type="FunFam" id="3.40.1550.20:FF:000001">
    <property type="entry name" value="Transcriptional regulator MraZ"/>
    <property type="match status" value="1"/>
</dbReference>
<dbReference type="Gene3D" id="3.40.1550.20">
    <property type="entry name" value="Transcriptional regulator MraZ domain"/>
    <property type="match status" value="1"/>
</dbReference>
<dbReference type="HAMAP" id="MF_01008">
    <property type="entry name" value="MraZ"/>
    <property type="match status" value="1"/>
</dbReference>
<dbReference type="InterPro" id="IPR003444">
    <property type="entry name" value="MraZ"/>
</dbReference>
<dbReference type="InterPro" id="IPR035644">
    <property type="entry name" value="MraZ_C"/>
</dbReference>
<dbReference type="InterPro" id="IPR020603">
    <property type="entry name" value="MraZ_dom"/>
</dbReference>
<dbReference type="InterPro" id="IPR035642">
    <property type="entry name" value="MraZ_N"/>
</dbReference>
<dbReference type="InterPro" id="IPR038619">
    <property type="entry name" value="MraZ_sf"/>
</dbReference>
<dbReference type="InterPro" id="IPR007159">
    <property type="entry name" value="SpoVT-AbrB_dom"/>
</dbReference>
<dbReference type="InterPro" id="IPR037914">
    <property type="entry name" value="SpoVT-AbrB_sf"/>
</dbReference>
<dbReference type="NCBIfam" id="TIGR00242">
    <property type="entry name" value="division/cell wall cluster transcriptional repressor MraZ"/>
    <property type="match status" value="1"/>
</dbReference>
<dbReference type="PANTHER" id="PTHR34701">
    <property type="entry name" value="TRANSCRIPTIONAL REGULATOR MRAZ"/>
    <property type="match status" value="1"/>
</dbReference>
<dbReference type="PANTHER" id="PTHR34701:SF1">
    <property type="entry name" value="TRANSCRIPTIONAL REGULATOR MRAZ"/>
    <property type="match status" value="1"/>
</dbReference>
<dbReference type="Pfam" id="PF02381">
    <property type="entry name" value="MraZ"/>
    <property type="match status" value="2"/>
</dbReference>
<dbReference type="SUPFAM" id="SSF89447">
    <property type="entry name" value="AbrB/MazE/MraZ-like"/>
    <property type="match status" value="1"/>
</dbReference>
<dbReference type="PROSITE" id="PS51740">
    <property type="entry name" value="SPOVT_ABRB"/>
    <property type="match status" value="2"/>
</dbReference>
<feature type="chain" id="PRO_1000062939" description="Transcriptional regulator MraZ">
    <location>
        <begin position="1"/>
        <end position="152"/>
    </location>
</feature>
<feature type="domain" description="SpoVT-AbrB 1" evidence="2">
    <location>
        <begin position="5"/>
        <end position="52"/>
    </location>
</feature>
<feature type="domain" description="SpoVT-AbrB 2" evidence="2">
    <location>
        <begin position="81"/>
        <end position="124"/>
    </location>
</feature>
<comment type="function">
    <text evidence="1">Negatively regulates its own expression and that of the subsequent genes in the proximal part of the division and cell wall (dcw) gene cluster. Acts by binding directly to DNA. May also regulate the expression of genes outside the dcw cluster.</text>
</comment>
<comment type="subunit">
    <text evidence="1">Forms oligomers.</text>
</comment>
<comment type="subcellular location">
    <subcellularLocation>
        <location evidence="1">Cytoplasm</location>
        <location evidence="1">Nucleoid</location>
    </subcellularLocation>
</comment>
<comment type="similarity">
    <text evidence="1">Belongs to the MraZ family.</text>
</comment>
<organism>
    <name type="scientific">Shigella flexneri serotype 5b (strain 8401)</name>
    <dbReference type="NCBI Taxonomy" id="373384"/>
    <lineage>
        <taxon>Bacteria</taxon>
        <taxon>Pseudomonadati</taxon>
        <taxon>Pseudomonadota</taxon>
        <taxon>Gammaproteobacteria</taxon>
        <taxon>Enterobacterales</taxon>
        <taxon>Enterobacteriaceae</taxon>
        <taxon>Shigella</taxon>
    </lineage>
</organism>
<protein>
    <recommendedName>
        <fullName>Transcriptional regulator MraZ</fullName>
    </recommendedName>
</protein>
<reference key="1">
    <citation type="journal article" date="2006" name="BMC Genomics">
        <title>Complete genome sequence of Shigella flexneri 5b and comparison with Shigella flexneri 2a.</title>
        <authorList>
            <person name="Nie H."/>
            <person name="Yang F."/>
            <person name="Zhang X."/>
            <person name="Yang J."/>
            <person name="Chen L."/>
            <person name="Wang J."/>
            <person name="Xiong Z."/>
            <person name="Peng J."/>
            <person name="Sun L."/>
            <person name="Dong J."/>
            <person name="Xue Y."/>
            <person name="Xu X."/>
            <person name="Chen S."/>
            <person name="Yao Z."/>
            <person name="Shen Y."/>
            <person name="Jin Q."/>
        </authorList>
    </citation>
    <scope>NUCLEOTIDE SEQUENCE [LARGE SCALE GENOMIC DNA]</scope>
    <source>
        <strain>8401</strain>
    </source>
</reference>
<evidence type="ECO:0000255" key="1">
    <source>
        <dbReference type="HAMAP-Rule" id="MF_01008"/>
    </source>
</evidence>
<evidence type="ECO:0000255" key="2">
    <source>
        <dbReference type="PROSITE-ProRule" id="PRU01076"/>
    </source>
</evidence>
<keyword id="KW-0963">Cytoplasm</keyword>
<keyword id="KW-0238">DNA-binding</keyword>
<keyword id="KW-0677">Repeat</keyword>
<keyword id="KW-0678">Repressor</keyword>
<keyword id="KW-0804">Transcription</keyword>
<keyword id="KW-0805">Transcription regulation</keyword>
<accession>Q0T8B6</accession>